<organism>
    <name type="scientific">Rattus norvegicus</name>
    <name type="common">Rat</name>
    <dbReference type="NCBI Taxonomy" id="10116"/>
    <lineage>
        <taxon>Eukaryota</taxon>
        <taxon>Metazoa</taxon>
        <taxon>Chordata</taxon>
        <taxon>Craniata</taxon>
        <taxon>Vertebrata</taxon>
        <taxon>Euteleostomi</taxon>
        <taxon>Mammalia</taxon>
        <taxon>Eutheria</taxon>
        <taxon>Euarchontoglires</taxon>
        <taxon>Glires</taxon>
        <taxon>Rodentia</taxon>
        <taxon>Myomorpha</taxon>
        <taxon>Muroidea</taxon>
        <taxon>Muridae</taxon>
        <taxon>Murinae</taxon>
        <taxon>Rattus</taxon>
    </lineage>
</organism>
<accession>Q5U2W7</accession>
<protein>
    <recommendedName>
        <fullName evidence="5">Lysosomal membrane ascorbate-dependent ferrireductase CYB561A3</fullName>
        <ecNumber evidence="2">7.2.1.3</ecNumber>
    </recommendedName>
    <alternativeName>
        <fullName evidence="6">Cytochrome b ascorbate-dependent protein 3</fullName>
    </alternativeName>
    <alternativeName>
        <fullName evidence="6">Cytochrome b561 family member A3</fullName>
    </alternativeName>
    <alternativeName>
        <fullName evidence="2">Lysosomal cytochrome b</fullName>
        <shortName evidence="2">LCytb</shortName>
    </alternativeName>
</protein>
<evidence type="ECO:0000250" key="1">
    <source>
        <dbReference type="UniProtKB" id="Q53TN4"/>
    </source>
</evidence>
<evidence type="ECO:0000250" key="2">
    <source>
        <dbReference type="UniProtKB" id="Q6P1H1"/>
    </source>
</evidence>
<evidence type="ECO:0000255" key="3"/>
<evidence type="ECO:0000255" key="4">
    <source>
        <dbReference type="PROSITE-ProRule" id="PRU00242"/>
    </source>
</evidence>
<evidence type="ECO:0000305" key="5"/>
<evidence type="ECO:0000312" key="6">
    <source>
        <dbReference type="RGD" id="1304670"/>
    </source>
</evidence>
<keyword id="KW-0249">Electron transport</keyword>
<keyword id="KW-0967">Endosome</keyword>
<keyword id="KW-0325">Glycoprotein</keyword>
<keyword id="KW-0349">Heme</keyword>
<keyword id="KW-0408">Iron</keyword>
<keyword id="KW-0458">Lysosome</keyword>
<keyword id="KW-0472">Membrane</keyword>
<keyword id="KW-0479">Metal-binding</keyword>
<keyword id="KW-0560">Oxidoreductase</keyword>
<keyword id="KW-1185">Reference proteome</keyword>
<keyword id="KW-1278">Translocase</keyword>
<keyword id="KW-0812">Transmembrane</keyword>
<keyword id="KW-1133">Transmembrane helix</keyword>
<keyword id="KW-0813">Transport</keyword>
<proteinExistence type="evidence at transcript level"/>
<reference key="1">
    <citation type="journal article" date="2004" name="Genome Res.">
        <title>The status, quality, and expansion of the NIH full-length cDNA project: the Mammalian Gene Collection (MGC).</title>
        <authorList>
            <consortium name="The MGC Project Team"/>
        </authorList>
    </citation>
    <scope>NUCLEOTIDE SEQUENCE [LARGE SCALE MRNA]</scope>
    <source>
        <tissue>Testis</tissue>
    </source>
</reference>
<sequence>MASGWFYMSCMVLGSLGSMCILFTTYWMQYWRGGFAWDGTVLMFNWHPVLMVSGMVVLYGAASLVYRLPASWVGPKLPWKVLHAALHLLAFTVTVVGLTAVFGFHNHSKITHLYSLHSWLGITTVALFACQWFLGFAVFLLPWASQWLRSLLKPVHVFFGACILSLSIASVISGINEKLFFVLKNATRPYSSLPGEAVFANSTGILVVSFGLLVLYILLASSWRRPDPGALTDRQVWLLVSHYRWDKAKKACFAPC</sequence>
<gene>
    <name evidence="6" type="primary">Cyb561a3</name>
    <name evidence="6" type="synonym">Cybasc3</name>
</gene>
<dbReference type="EC" id="7.2.1.3" evidence="2"/>
<dbReference type="EMBL" id="BC085835">
    <property type="protein sequence ID" value="AAH85835.1"/>
    <property type="molecule type" value="mRNA"/>
</dbReference>
<dbReference type="RefSeq" id="NP_001014186.1">
    <property type="nucleotide sequence ID" value="NM_001014164.2"/>
</dbReference>
<dbReference type="RefSeq" id="XP_006231112.1">
    <property type="nucleotide sequence ID" value="XM_006231050.3"/>
</dbReference>
<dbReference type="RefSeq" id="XP_006231113.1">
    <property type="nucleotide sequence ID" value="XM_006231051.3"/>
</dbReference>
<dbReference type="RefSeq" id="XP_006231114.1">
    <property type="nucleotide sequence ID" value="XM_006231052.3"/>
</dbReference>
<dbReference type="RefSeq" id="XP_006231115.1">
    <property type="nucleotide sequence ID" value="XM_006231053.3"/>
</dbReference>
<dbReference type="RefSeq" id="XP_006231116.1">
    <property type="nucleotide sequence ID" value="XM_006231054.3"/>
</dbReference>
<dbReference type="RefSeq" id="XP_006231117.1">
    <property type="nucleotide sequence ID" value="XM_006231055.3"/>
</dbReference>
<dbReference type="SMR" id="Q5U2W7"/>
<dbReference type="FunCoup" id="Q5U2W7">
    <property type="interactions" value="701"/>
</dbReference>
<dbReference type="STRING" id="10116.ENSRNOP00000028094"/>
<dbReference type="GlyCosmos" id="Q5U2W7">
    <property type="glycosylation" value="1 site, No reported glycans"/>
</dbReference>
<dbReference type="GlyGen" id="Q5U2W7">
    <property type="glycosylation" value="1 site"/>
</dbReference>
<dbReference type="PaxDb" id="10116-ENSRNOP00000028094"/>
<dbReference type="GeneID" id="361729"/>
<dbReference type="KEGG" id="rno:361729"/>
<dbReference type="UCSC" id="RGD:1304670">
    <property type="organism name" value="rat"/>
</dbReference>
<dbReference type="AGR" id="RGD:1304670"/>
<dbReference type="CTD" id="220002"/>
<dbReference type="RGD" id="1304670">
    <property type="gene designation" value="Cyb561a3"/>
</dbReference>
<dbReference type="VEuPathDB" id="HostDB:ENSRNOG00000020702"/>
<dbReference type="eggNOG" id="KOG1619">
    <property type="taxonomic scope" value="Eukaryota"/>
</dbReference>
<dbReference type="HOGENOM" id="CLU_069712_1_3_1"/>
<dbReference type="InParanoid" id="Q5U2W7"/>
<dbReference type="PhylomeDB" id="Q5U2W7"/>
<dbReference type="TreeFam" id="TF314222"/>
<dbReference type="PRO" id="PR:Q5U2W7"/>
<dbReference type="Proteomes" id="UP000002494">
    <property type="component" value="Chromosome 1"/>
</dbReference>
<dbReference type="Bgee" id="ENSRNOG00000020702">
    <property type="expression patterns" value="Expressed in spleen and 18 other cell types or tissues"/>
</dbReference>
<dbReference type="GO" id="GO:0031902">
    <property type="term" value="C:late endosome membrane"/>
    <property type="evidence" value="ECO:0000250"/>
    <property type="project" value="UniProtKB"/>
</dbReference>
<dbReference type="GO" id="GO:0005765">
    <property type="term" value="C:lysosomal membrane"/>
    <property type="evidence" value="ECO:0000250"/>
    <property type="project" value="UniProtKB"/>
</dbReference>
<dbReference type="GO" id="GO:0005764">
    <property type="term" value="C:lysosome"/>
    <property type="evidence" value="ECO:0000266"/>
    <property type="project" value="RGD"/>
</dbReference>
<dbReference type="GO" id="GO:0046872">
    <property type="term" value="F:metal ion binding"/>
    <property type="evidence" value="ECO:0007669"/>
    <property type="project" value="UniProtKB-KW"/>
</dbReference>
<dbReference type="GO" id="GO:0016491">
    <property type="term" value="F:oxidoreductase activity"/>
    <property type="evidence" value="ECO:0000318"/>
    <property type="project" value="GO_Central"/>
</dbReference>
<dbReference type="GO" id="GO:0140571">
    <property type="term" value="F:transmembrane ascorbate ferrireductase activity"/>
    <property type="evidence" value="ECO:0000250"/>
    <property type="project" value="UniProtKB"/>
</dbReference>
<dbReference type="GO" id="GO:0006879">
    <property type="term" value="P:intracellular iron ion homeostasis"/>
    <property type="evidence" value="ECO:0000250"/>
    <property type="project" value="UniProtKB"/>
</dbReference>
<dbReference type="FunFam" id="1.20.120.1770:FF:000001">
    <property type="entry name" value="Cytochrome b reductase 1"/>
    <property type="match status" value="1"/>
</dbReference>
<dbReference type="Gene3D" id="1.20.120.1770">
    <property type="match status" value="1"/>
</dbReference>
<dbReference type="InterPro" id="IPR043205">
    <property type="entry name" value="CYB561/CYBRD1-like"/>
</dbReference>
<dbReference type="InterPro" id="IPR006593">
    <property type="entry name" value="Cyt_b561/ferric_Rdtase_TM"/>
</dbReference>
<dbReference type="PANTHER" id="PTHR10106">
    <property type="entry name" value="CYTOCHROME B561-RELATED"/>
    <property type="match status" value="1"/>
</dbReference>
<dbReference type="PANTHER" id="PTHR10106:SF38">
    <property type="entry name" value="LYSOSOMAL MEMBRANE ASCORBATE-DEPENDENT FERRIREDUCTASE CYB561A3"/>
    <property type="match status" value="1"/>
</dbReference>
<dbReference type="Pfam" id="PF03188">
    <property type="entry name" value="Cytochrom_B561"/>
    <property type="match status" value="1"/>
</dbReference>
<dbReference type="SMART" id="SM00665">
    <property type="entry name" value="B561"/>
    <property type="match status" value="1"/>
</dbReference>
<dbReference type="PROSITE" id="PS50939">
    <property type="entry name" value="CYTOCHROME_B561"/>
    <property type="match status" value="1"/>
</dbReference>
<feature type="chain" id="PRO_0000314840" description="Lysosomal membrane ascorbate-dependent ferrireductase CYB561A3">
    <location>
        <begin position="1"/>
        <end position="256"/>
    </location>
</feature>
<feature type="topological domain" description="Cytoplasmic" evidence="1">
    <location>
        <begin position="1"/>
        <end position="3"/>
    </location>
</feature>
<feature type="transmembrane region" description="Helical" evidence="3">
    <location>
        <begin position="4"/>
        <end position="24"/>
    </location>
</feature>
<feature type="topological domain" description="Lumenal" evidence="1">
    <location>
        <begin position="25"/>
        <end position="40"/>
    </location>
</feature>
<feature type="transmembrane region" description="Helical" evidence="3">
    <location>
        <begin position="41"/>
        <end position="61"/>
    </location>
</feature>
<feature type="topological domain" description="Cytoplasmic" evidence="1">
    <location>
        <begin position="62"/>
        <end position="83"/>
    </location>
</feature>
<feature type="transmembrane region" description="Helical" evidence="3">
    <location>
        <begin position="84"/>
        <end position="104"/>
    </location>
</feature>
<feature type="topological domain" description="Lumenal" evidence="1">
    <location>
        <begin position="105"/>
        <end position="119"/>
    </location>
</feature>
<feature type="transmembrane region" description="Helical" evidence="3">
    <location>
        <begin position="120"/>
        <end position="140"/>
    </location>
</feature>
<feature type="topological domain" description="Cytoplasmic" evidence="1">
    <location>
        <begin position="141"/>
        <end position="154"/>
    </location>
</feature>
<feature type="transmembrane region" description="Helical" evidence="3">
    <location>
        <begin position="155"/>
        <end position="175"/>
    </location>
</feature>
<feature type="topological domain" description="Lumenal" evidence="1">
    <location>
        <begin position="176"/>
        <end position="202"/>
    </location>
</feature>
<feature type="transmembrane region" description="Helical" evidence="3">
    <location>
        <begin position="203"/>
        <end position="223"/>
    </location>
</feature>
<feature type="topological domain" description="Cytoplasmic" evidence="1">
    <location>
        <begin position="224"/>
        <end position="256"/>
    </location>
</feature>
<feature type="domain" description="Cytochrome b561" evidence="4">
    <location>
        <begin position="12"/>
        <end position="219"/>
    </location>
</feature>
<feature type="binding site" description="axial binding residue" evidence="1">
    <location>
        <position position="47"/>
    </location>
    <ligand>
        <name>heme b</name>
        <dbReference type="ChEBI" id="CHEBI:60344"/>
        <label>1</label>
    </ligand>
    <ligandPart>
        <name>Fe</name>
        <dbReference type="ChEBI" id="CHEBI:18248"/>
    </ligandPart>
</feature>
<feature type="binding site" evidence="1">
    <location>
        <position position="67"/>
    </location>
    <ligand>
        <name>heme b</name>
        <dbReference type="ChEBI" id="CHEBI:60344"/>
        <label>2</label>
    </ligand>
</feature>
<feature type="binding site" evidence="1">
    <location>
        <position position="76"/>
    </location>
    <ligand>
        <name>L-ascorbate</name>
        <dbReference type="ChEBI" id="CHEBI:38290"/>
    </ligand>
</feature>
<feature type="binding site" evidence="1">
    <location>
        <position position="80"/>
    </location>
    <ligand>
        <name>L-ascorbate</name>
        <dbReference type="ChEBI" id="CHEBI:38290"/>
    </ligand>
</feature>
<feature type="binding site" description="axial binding residue" evidence="1">
    <location>
        <position position="83"/>
    </location>
    <ligand>
        <name>heme b</name>
        <dbReference type="ChEBI" id="CHEBI:60344"/>
        <label>2</label>
    </ligand>
    <ligandPart>
        <name>Fe</name>
        <dbReference type="ChEBI" id="CHEBI:18248"/>
    </ligandPart>
</feature>
<feature type="binding site" evidence="1">
    <location>
        <begin position="112"/>
        <end position="115"/>
    </location>
    <ligand>
        <name>heme b</name>
        <dbReference type="ChEBI" id="CHEBI:60344"/>
        <label>1</label>
    </ligand>
</feature>
<feature type="binding site" description="axial binding residue" evidence="1">
    <location>
        <position position="117"/>
    </location>
    <ligand>
        <name>heme b</name>
        <dbReference type="ChEBI" id="CHEBI:60344"/>
        <label>1</label>
    </ligand>
    <ligandPart>
        <name>Fe</name>
        <dbReference type="ChEBI" id="CHEBI:18248"/>
    </ligandPart>
</feature>
<feature type="binding site" evidence="1">
    <location>
        <position position="149"/>
    </location>
    <ligand>
        <name>L-ascorbate</name>
        <dbReference type="ChEBI" id="CHEBI:38290"/>
    </ligand>
</feature>
<feature type="binding site" description="axial binding residue" evidence="1">
    <location>
        <position position="156"/>
    </location>
    <ligand>
        <name>heme b</name>
        <dbReference type="ChEBI" id="CHEBI:60344"/>
        <label>2</label>
    </ligand>
    <ligandPart>
        <name>Fe</name>
        <dbReference type="ChEBI" id="CHEBI:18248"/>
    </ligandPart>
</feature>
<feature type="binding site" evidence="1">
    <location>
        <position position="177"/>
    </location>
    <ligand>
        <name>heme b</name>
        <dbReference type="ChEBI" id="CHEBI:60344"/>
        <label>1</label>
    </ligand>
</feature>
<feature type="binding site" evidence="1">
    <location>
        <position position="224"/>
    </location>
    <ligand>
        <name>heme b</name>
        <dbReference type="ChEBI" id="CHEBI:60344"/>
        <label>2</label>
    </ligand>
</feature>
<feature type="glycosylation site" description="N-linked (GlcNAc...) asparagine" evidence="3">
    <location>
        <position position="106"/>
    </location>
</feature>
<comment type="function">
    <text evidence="2">Transmembrane reductase that uses ascorbate as an electron donor in the cytoplasm and transfers electrons across membranes to reduce iron cations Fe(3+) into Fe(2+) in the lumen of the late endosome and lysosome. Reduced iron can then be extruded from the late endosome and lysosome to the cytoplasm by divalent metal-specific transporters. It is therefore most probably involved in endosomal and lysosomal cellular iron homeostasis.</text>
</comment>
<comment type="catalytic activity">
    <reaction evidence="2">
        <text>Fe(3+)(out) + L-ascorbate(in) = monodehydro-L-ascorbate radical(in) + Fe(2+)(out) + H(+)</text>
        <dbReference type="Rhea" id="RHEA:30403"/>
        <dbReference type="ChEBI" id="CHEBI:15378"/>
        <dbReference type="ChEBI" id="CHEBI:29033"/>
        <dbReference type="ChEBI" id="CHEBI:29034"/>
        <dbReference type="ChEBI" id="CHEBI:38290"/>
        <dbReference type="ChEBI" id="CHEBI:59513"/>
        <dbReference type="EC" id="7.2.1.3"/>
    </reaction>
    <physiologicalReaction direction="left-to-right" evidence="2">
        <dbReference type="Rhea" id="RHEA:30404"/>
    </physiologicalReaction>
</comment>
<comment type="cofactor">
    <cofactor evidence="1">
        <name>heme b</name>
        <dbReference type="ChEBI" id="CHEBI:60344"/>
    </cofactor>
    <text evidence="1">Binds 2 heme b groups non-covalently.</text>
</comment>
<comment type="subunit">
    <text evidence="1">Homodimer.</text>
</comment>
<comment type="subcellular location">
    <subcellularLocation>
        <location evidence="2">Late endosome membrane</location>
        <topology evidence="1">Multi-pass membrane protein</topology>
    </subcellularLocation>
    <subcellularLocation>
        <location evidence="2">Lysosome membrane</location>
        <topology evidence="1">Multi-pass membrane protein</topology>
    </subcellularLocation>
</comment>
<comment type="PTM">
    <text evidence="2">N-glycosylated.</text>
</comment>
<name>CYAC3_RAT</name>